<gene>
    <name evidence="2" type="primary">infB</name>
    <name type="ordered locus">BF0263</name>
</gene>
<proteinExistence type="inferred from homology"/>
<name>IF2_BACFR</name>
<feature type="chain" id="PRO_0000228168" description="Translation initiation factor IF-2">
    <location>
        <begin position="1"/>
        <end position="1015"/>
    </location>
</feature>
<feature type="domain" description="tr-type G">
    <location>
        <begin position="514"/>
        <end position="684"/>
    </location>
</feature>
<feature type="region of interest" description="Disordered" evidence="3">
    <location>
        <begin position="124"/>
        <end position="144"/>
    </location>
</feature>
<feature type="region of interest" description="Disordered" evidence="3">
    <location>
        <begin position="159"/>
        <end position="179"/>
    </location>
</feature>
<feature type="region of interest" description="Disordered" evidence="3">
    <location>
        <begin position="196"/>
        <end position="230"/>
    </location>
</feature>
<feature type="region of interest" description="Disordered" evidence="3">
    <location>
        <begin position="250"/>
        <end position="386"/>
    </location>
</feature>
<feature type="region of interest" description="G1" evidence="1">
    <location>
        <begin position="523"/>
        <end position="530"/>
    </location>
</feature>
<feature type="region of interest" description="G2" evidence="1">
    <location>
        <begin position="548"/>
        <end position="552"/>
    </location>
</feature>
<feature type="region of interest" description="G3" evidence="1">
    <location>
        <begin position="570"/>
        <end position="573"/>
    </location>
</feature>
<feature type="region of interest" description="G4" evidence="1">
    <location>
        <begin position="624"/>
        <end position="627"/>
    </location>
</feature>
<feature type="region of interest" description="G5" evidence="1">
    <location>
        <begin position="660"/>
        <end position="662"/>
    </location>
</feature>
<feature type="compositionally biased region" description="Basic and acidic residues" evidence="3">
    <location>
        <begin position="196"/>
        <end position="217"/>
    </location>
</feature>
<feature type="compositionally biased region" description="Basic and acidic residues" evidence="3">
    <location>
        <begin position="265"/>
        <end position="315"/>
    </location>
</feature>
<feature type="binding site" evidence="2">
    <location>
        <begin position="523"/>
        <end position="530"/>
    </location>
    <ligand>
        <name>GTP</name>
        <dbReference type="ChEBI" id="CHEBI:37565"/>
    </ligand>
</feature>
<feature type="binding site" evidence="2">
    <location>
        <begin position="570"/>
        <end position="574"/>
    </location>
    <ligand>
        <name>GTP</name>
        <dbReference type="ChEBI" id="CHEBI:37565"/>
    </ligand>
</feature>
<feature type="binding site" evidence="2">
    <location>
        <begin position="624"/>
        <end position="627"/>
    </location>
    <ligand>
        <name>GTP</name>
        <dbReference type="ChEBI" id="CHEBI:37565"/>
    </ligand>
</feature>
<evidence type="ECO:0000250" key="1"/>
<evidence type="ECO:0000255" key="2">
    <source>
        <dbReference type="HAMAP-Rule" id="MF_00100"/>
    </source>
</evidence>
<evidence type="ECO:0000256" key="3">
    <source>
        <dbReference type="SAM" id="MobiDB-lite"/>
    </source>
</evidence>
<keyword id="KW-0963">Cytoplasm</keyword>
<keyword id="KW-0342">GTP-binding</keyword>
<keyword id="KW-0396">Initiation factor</keyword>
<keyword id="KW-0547">Nucleotide-binding</keyword>
<keyword id="KW-0648">Protein biosynthesis</keyword>
<reference key="1">
    <citation type="journal article" date="2004" name="Proc. Natl. Acad. Sci. U.S.A.">
        <title>Genomic analysis of Bacteroides fragilis reveals extensive DNA inversions regulating cell surface adaptation.</title>
        <authorList>
            <person name="Kuwahara T."/>
            <person name="Yamashita A."/>
            <person name="Hirakawa H."/>
            <person name="Nakayama H."/>
            <person name="Toh H."/>
            <person name="Okada N."/>
            <person name="Kuhara S."/>
            <person name="Hattori M."/>
            <person name="Hayashi T."/>
            <person name="Ohnishi Y."/>
        </authorList>
    </citation>
    <scope>NUCLEOTIDE SEQUENCE [LARGE SCALE GENOMIC DNA]</scope>
    <source>
        <strain>YCH46</strain>
    </source>
</reference>
<comment type="function">
    <text evidence="2">One of the essential components for the initiation of protein synthesis. Protects formylmethionyl-tRNA from spontaneous hydrolysis and promotes its binding to the 30S ribosomal subunits. Also involved in the hydrolysis of GTP during the formation of the 70S ribosomal complex.</text>
</comment>
<comment type="subcellular location">
    <subcellularLocation>
        <location evidence="2">Cytoplasm</location>
    </subcellularLocation>
</comment>
<comment type="similarity">
    <text evidence="2">Belongs to the TRAFAC class translation factor GTPase superfamily. Classic translation factor GTPase family. IF-2 subfamily.</text>
</comment>
<dbReference type="EMBL" id="AP006841">
    <property type="protein sequence ID" value="BAD47012.1"/>
    <property type="molecule type" value="Genomic_DNA"/>
</dbReference>
<dbReference type="RefSeq" id="WP_005783920.1">
    <property type="nucleotide sequence ID" value="NC_006347.1"/>
</dbReference>
<dbReference type="RefSeq" id="YP_097546.1">
    <property type="nucleotide sequence ID" value="NC_006347.1"/>
</dbReference>
<dbReference type="SMR" id="Q64ZR4"/>
<dbReference type="STRING" id="295405.BF0263"/>
<dbReference type="GeneID" id="60369796"/>
<dbReference type="KEGG" id="bfr:BF0263"/>
<dbReference type="PATRIC" id="fig|295405.11.peg.293"/>
<dbReference type="HOGENOM" id="CLU_006301_0_0_10"/>
<dbReference type="OrthoDB" id="9811804at2"/>
<dbReference type="Proteomes" id="UP000002197">
    <property type="component" value="Chromosome"/>
</dbReference>
<dbReference type="GO" id="GO:0005737">
    <property type="term" value="C:cytoplasm"/>
    <property type="evidence" value="ECO:0007669"/>
    <property type="project" value="UniProtKB-SubCell"/>
</dbReference>
<dbReference type="GO" id="GO:0005525">
    <property type="term" value="F:GTP binding"/>
    <property type="evidence" value="ECO:0007669"/>
    <property type="project" value="UniProtKB-KW"/>
</dbReference>
<dbReference type="GO" id="GO:0003924">
    <property type="term" value="F:GTPase activity"/>
    <property type="evidence" value="ECO:0007669"/>
    <property type="project" value="UniProtKB-UniRule"/>
</dbReference>
<dbReference type="GO" id="GO:0003743">
    <property type="term" value="F:translation initiation factor activity"/>
    <property type="evidence" value="ECO:0007669"/>
    <property type="project" value="UniProtKB-UniRule"/>
</dbReference>
<dbReference type="CDD" id="cd01887">
    <property type="entry name" value="IF2_eIF5B"/>
    <property type="match status" value="1"/>
</dbReference>
<dbReference type="CDD" id="cd03702">
    <property type="entry name" value="IF2_mtIF2_II"/>
    <property type="match status" value="1"/>
</dbReference>
<dbReference type="CDD" id="cd03692">
    <property type="entry name" value="mtIF2_IVc"/>
    <property type="match status" value="1"/>
</dbReference>
<dbReference type="FunFam" id="2.40.30.10:FF:000007">
    <property type="entry name" value="Translation initiation factor IF-2"/>
    <property type="match status" value="1"/>
</dbReference>
<dbReference type="FunFam" id="2.40.30.10:FF:000008">
    <property type="entry name" value="Translation initiation factor IF-2"/>
    <property type="match status" value="1"/>
</dbReference>
<dbReference type="FunFam" id="3.40.50.10050:FF:000001">
    <property type="entry name" value="Translation initiation factor IF-2"/>
    <property type="match status" value="1"/>
</dbReference>
<dbReference type="FunFam" id="3.40.50.300:FF:000019">
    <property type="entry name" value="Translation initiation factor IF-2"/>
    <property type="match status" value="1"/>
</dbReference>
<dbReference type="Gene3D" id="3.40.50.300">
    <property type="entry name" value="P-loop containing nucleotide triphosphate hydrolases"/>
    <property type="match status" value="1"/>
</dbReference>
<dbReference type="Gene3D" id="2.40.30.10">
    <property type="entry name" value="Translation factors"/>
    <property type="match status" value="2"/>
</dbReference>
<dbReference type="Gene3D" id="3.40.50.10050">
    <property type="entry name" value="Translation initiation factor IF- 2, domain 3"/>
    <property type="match status" value="1"/>
</dbReference>
<dbReference type="HAMAP" id="MF_00100_B">
    <property type="entry name" value="IF_2_B"/>
    <property type="match status" value="1"/>
</dbReference>
<dbReference type="InterPro" id="IPR053905">
    <property type="entry name" value="EF-G-like_DII"/>
</dbReference>
<dbReference type="InterPro" id="IPR044145">
    <property type="entry name" value="IF2_II"/>
</dbReference>
<dbReference type="InterPro" id="IPR006847">
    <property type="entry name" value="IF2_N"/>
</dbReference>
<dbReference type="InterPro" id="IPR027417">
    <property type="entry name" value="P-loop_NTPase"/>
</dbReference>
<dbReference type="InterPro" id="IPR005225">
    <property type="entry name" value="Small_GTP-bd"/>
</dbReference>
<dbReference type="InterPro" id="IPR000795">
    <property type="entry name" value="T_Tr_GTP-bd_dom"/>
</dbReference>
<dbReference type="InterPro" id="IPR000178">
    <property type="entry name" value="TF_IF2_bacterial-like"/>
</dbReference>
<dbReference type="InterPro" id="IPR015760">
    <property type="entry name" value="TIF_IF2"/>
</dbReference>
<dbReference type="InterPro" id="IPR023115">
    <property type="entry name" value="TIF_IF2_dom3"/>
</dbReference>
<dbReference type="InterPro" id="IPR036925">
    <property type="entry name" value="TIF_IF2_dom3_sf"/>
</dbReference>
<dbReference type="InterPro" id="IPR009000">
    <property type="entry name" value="Transl_B-barrel_sf"/>
</dbReference>
<dbReference type="NCBIfam" id="TIGR00487">
    <property type="entry name" value="IF-2"/>
    <property type="match status" value="1"/>
</dbReference>
<dbReference type="NCBIfam" id="TIGR00231">
    <property type="entry name" value="small_GTP"/>
    <property type="match status" value="1"/>
</dbReference>
<dbReference type="PANTHER" id="PTHR43381:SF5">
    <property type="entry name" value="TR-TYPE G DOMAIN-CONTAINING PROTEIN"/>
    <property type="match status" value="1"/>
</dbReference>
<dbReference type="PANTHER" id="PTHR43381">
    <property type="entry name" value="TRANSLATION INITIATION FACTOR IF-2-RELATED"/>
    <property type="match status" value="1"/>
</dbReference>
<dbReference type="Pfam" id="PF22042">
    <property type="entry name" value="EF-G_D2"/>
    <property type="match status" value="1"/>
</dbReference>
<dbReference type="Pfam" id="PF00009">
    <property type="entry name" value="GTP_EFTU"/>
    <property type="match status" value="1"/>
</dbReference>
<dbReference type="Pfam" id="PF11987">
    <property type="entry name" value="IF-2"/>
    <property type="match status" value="1"/>
</dbReference>
<dbReference type="Pfam" id="PF04760">
    <property type="entry name" value="IF2_N"/>
    <property type="match status" value="1"/>
</dbReference>
<dbReference type="SUPFAM" id="SSF52156">
    <property type="entry name" value="Initiation factor IF2/eIF5b, domain 3"/>
    <property type="match status" value="1"/>
</dbReference>
<dbReference type="SUPFAM" id="SSF52540">
    <property type="entry name" value="P-loop containing nucleoside triphosphate hydrolases"/>
    <property type="match status" value="1"/>
</dbReference>
<dbReference type="SUPFAM" id="SSF50447">
    <property type="entry name" value="Translation proteins"/>
    <property type="match status" value="2"/>
</dbReference>
<dbReference type="PROSITE" id="PS51722">
    <property type="entry name" value="G_TR_2"/>
    <property type="match status" value="1"/>
</dbReference>
<dbReference type="PROSITE" id="PS01176">
    <property type="entry name" value="IF2"/>
    <property type="match status" value="1"/>
</dbReference>
<protein>
    <recommendedName>
        <fullName evidence="2">Translation initiation factor IF-2</fullName>
    </recommendedName>
</protein>
<organism>
    <name type="scientific">Bacteroides fragilis (strain YCH46)</name>
    <dbReference type="NCBI Taxonomy" id="295405"/>
    <lineage>
        <taxon>Bacteria</taxon>
        <taxon>Pseudomonadati</taxon>
        <taxon>Bacteroidota</taxon>
        <taxon>Bacteroidia</taxon>
        <taxon>Bacteroidales</taxon>
        <taxon>Bacteroidaceae</taxon>
        <taxon>Bacteroides</taxon>
    </lineage>
</organism>
<accession>Q64ZR4</accession>
<sequence>MTIRLNKVTRDLNVGIATVVEFLQKKGYTVEANPNTKITEEQYAMLVKEFSTDKNLRLESERFIQERQNKDRNKASVSIDGYDKKEPEKTVADDVIKTVIPEDVRPKFKPVGKIDLDKLNRKVEKEPVKEEPKPQPVAAEEKKVAEEVKPVVNEVKKEEVTVTPATSEPKPVKEEPKPVVVEKPVETEKKVVEEVKKEEPKVVVSPEKTEKKEEKPVAEAPVTPVEKEEEGVFKIRPTEFVSKINVIGQIDLAALNQSTRPKKKSKEEKRKEREEKEKLRQDQKKQMKEAIIKEIRKEDSKQAKVVGKENLDPNGKKKRNRINNNKEKVDVNNVASNFAHPTPNSERTNNNRGGNQQGGGGQNRNRNNNNKDRFKKPVVKQEVSEEDVAKQVKETLARLTSKGKNKGAKYRKEKRDMASNRMQELEDQEMAESKVLKLTEFVTANELASMMNVSVNQVIGTCMSIGMMVSINQRLDAETINLVAEEFGFKTEYVSAEVAQAIVEEEDAPEDLEHRAPIVTVMGHVDHGKTSLLDYIRKANVIAGEAGGITQHIGAYHVTLEDGRKITFLDTPGHEAFTAMRARGAKVTDIAIIIVAADDDVMPQTKEAINHAAAAGVPIVFAINKIDKPHANPEKIKETLAQMNYLVEEWGGKYQSQDISAKKGLGVPELMEKVLLEAEMLDLKANPNRNATGSIIESTLDKGRGYVATVLVSNGTLKVGDIVLAGTSYGRVKAMFNERNQRVAQAGPSEPVLILGLNGAPAAGDTFHVIETDQEAREIANKREQLQREQGLRTQKLLTLDEVGRRIALGNFQELNVIVKGDVDGSIEALSDSLIKLSTEQIQVNVIHKAVGQISESDVTLAAASDAIIIGFQVRPSASARKFAEQEGVDIRLYSVIYAAIEEVKAAMEGMLAPEVKEVVTATIEVREVFHITKVGTVAGAVVKEGKVKRSDKARLIRDGIVIFSGSINALKRFKDDVKEVGTNFECGISLVNYNDLKVGDMIETYEEVEVKQTL</sequence>